<protein>
    <recommendedName>
        <fullName evidence="6">ATP-dependent RNA helicase DHX15</fullName>
        <ecNumber evidence="2">3.6.4.13</ecNumber>
    </recommendedName>
    <alternativeName>
        <fullName>DEAH box protein 15</fullName>
    </alternativeName>
</protein>
<comment type="function">
    <text evidence="1 2">RNA helicase involved in mRNA processing and antiviral innate immunity. Pre-mRNA processing factor involved in disassembly of spliceosomes after the release of mature mRNA. In cooperation with TFIP11 seem to be involved in the transition of the U2, U5 and U6 snRNP-containing IL complex to the snRNP-free IS complex leading to efficient debranching and turnover of excised introns. Plays a key role in antiviral innate immunity by promoting both MAVS-dependent signaling and NLRP6 inflammasome. Acts as an RNA virus sensor: recognizes and binds viral double stranded RNA (dsRNA) and activates the MAVS-dependent signaling to produce interferon-beta and interferon lambda-3 (IFNL3). Involved in intestinal antiviral innate immunity together with NLRP6: recognizes and binds viral dsRNA and promotes activation of the NLRP6 inflammasome in intestinal epithelial cells to restrict infection by enteric viruses. The NLRP6 inflammasome acts by promoting maturation and secretion of IL18 in the extracellular milieu (By similarity). Also involved in antibacterial innate immunity by promoting Wnt-induced antimicrobial protein expression in Paneth cells (By similarity).</text>
</comment>
<comment type="catalytic activity">
    <reaction evidence="2">
        <text>ATP + H2O = ADP + phosphate + H(+)</text>
        <dbReference type="Rhea" id="RHEA:13065"/>
        <dbReference type="ChEBI" id="CHEBI:15377"/>
        <dbReference type="ChEBI" id="CHEBI:15378"/>
        <dbReference type="ChEBI" id="CHEBI:30616"/>
        <dbReference type="ChEBI" id="CHEBI:43474"/>
        <dbReference type="ChEBI" id="CHEBI:456216"/>
        <dbReference type="EC" id="3.6.4.13"/>
    </reaction>
</comment>
<comment type="activity regulation">
    <text evidence="2">ATPase activity is enhanced upon binding to G-patch domain-containing proteins. G-patch domain-containing proteins act like a brace that tethers mobile sections of DHX15 together, stabilizing a functional conformation with high RNA affinity, thereby promoting the ATPase activity.</text>
</comment>
<comment type="subunit">
    <text evidence="2">Component of the U11/U12 snRNPs that are part of the U12-type spliceosome. Identified in the Intron Large spliceosome complex (IL, also named intron lariat spliceosome), a post-mRNA release spliceosomal complex containing the excised intron, U2, U5 and U6 snRNPs, and splicing factors; the association may be transient. The IL complex exists in two distinct conformations, one with the DHX15 (ILS2) and one without (ILS1). Interacts with TFIP11 (via G-patch domain); indicative for a recruitment to the IL complex. Interacts with SSB/La. Interacts with GPATCH2 (via G-patch domain); promoting the RNA helicase activity. Interacts with NKRF (via G-patch domain); promoting the RNA helicase activity. Interacts with NLRP6.</text>
</comment>
<comment type="subcellular location">
    <subcellularLocation>
        <location evidence="2">Nucleus</location>
    </subcellularLocation>
    <subcellularLocation>
        <location evidence="2">Nucleus</location>
        <location evidence="2">Nucleolus</location>
    </subcellularLocation>
</comment>
<comment type="similarity">
    <text evidence="6">Belongs to the DEAD box helicase family. DEAH subfamily. DDX15/PRP43 sub-subfamily.</text>
</comment>
<gene>
    <name evidence="2" type="primary">DHX15</name>
</gene>
<name>DHX15_PONAB</name>
<accession>Q5RAZ4</accession>
<accession>Q5NVD9</accession>
<organism>
    <name type="scientific">Pongo abelii</name>
    <name type="common">Sumatran orangutan</name>
    <name type="synonym">Pongo pygmaeus abelii</name>
    <dbReference type="NCBI Taxonomy" id="9601"/>
    <lineage>
        <taxon>Eukaryota</taxon>
        <taxon>Metazoa</taxon>
        <taxon>Chordata</taxon>
        <taxon>Craniata</taxon>
        <taxon>Vertebrata</taxon>
        <taxon>Euteleostomi</taxon>
        <taxon>Mammalia</taxon>
        <taxon>Eutheria</taxon>
        <taxon>Euarchontoglires</taxon>
        <taxon>Primates</taxon>
        <taxon>Haplorrhini</taxon>
        <taxon>Catarrhini</taxon>
        <taxon>Hominidae</taxon>
        <taxon>Pongo</taxon>
    </lineage>
</organism>
<sequence length="795" mass="90903">MSKRHRLDLGEDYPSGKKRAGTDGKDRDRDRDREDRSKDRDRERDRGDREREREKEKEKELRASTNAMLISAGLPPLKASHSAHSTHSAHSAHSTHSAHSTHAGHAGHTSLPQCINPFTNLPHTPRYYDILKKRLQLPVWEYKDRFTDILVRHQSFVLVGETGSGKTTQIPQWCVEYMRSLPGPKRGVACTQPRRVAAMSVAQRVADEMDVMLGQEVGYSIRFEDCSSAKTILKYMTDGMLLREAMNDPLLERYGVIILDEAHERTLATDILMGVLKEVVRQRSDLKVIVMSATLDAGKFQIYFDNCPLLTIPGRTHPVEIFYTPEPERDYLEAAIRTVIQIHMCEEEEGDLLLFLTGQEEIDEACKRIKREVDDLGPEVGDIKIIPLYSTLPPQQQQRIFEPPPPKKQNGAIGRKVVVSTNIAETSLTIDGVVFVIDPGFAKQKVYNPRIRVESLLVTAISKASAQQRAGRAGRTRPGKCFRLYTEKAYKTEMQDNTYPEILRSNLGSVVLQLKKLGIDDLVHFDFMDPPAPETLMRALELLNYLAALNDDGDLTELGSMMAEFPLDPQLAKMVIASCDYNCSNEVLSITAMLSVPQCFVRPTEAKKAADEAKMRFAHIDGDHLTLLNVYHAFKQNHESVQWCYDNFINYRSLMSADNVRQQLSRIMDRFNLPRRSTDFTSRDYYINIRKALVTGYFMQVAHLERTGHYLTVKDNQVVQLHPSTVLDHKPEWVLYNEFVLTTKNYIRTCTDIKPEWLVKIAPQYYDMSNFPQCEAKRQLDRIIAKLQSKEYSQY</sequence>
<keyword id="KW-0007">Acetylation</keyword>
<keyword id="KW-0067">ATP-binding</keyword>
<keyword id="KW-0347">Helicase</keyword>
<keyword id="KW-0378">Hydrolase</keyword>
<keyword id="KW-0391">Immunity</keyword>
<keyword id="KW-0399">Innate immunity</keyword>
<keyword id="KW-1017">Isopeptide bond</keyword>
<keyword id="KW-0507">mRNA processing</keyword>
<keyword id="KW-0508">mRNA splicing</keyword>
<keyword id="KW-0547">Nucleotide-binding</keyword>
<keyword id="KW-0539">Nucleus</keyword>
<keyword id="KW-0597">Phosphoprotein</keyword>
<keyword id="KW-1185">Reference proteome</keyword>
<keyword id="KW-0694">RNA-binding</keyword>
<keyword id="KW-0832">Ubl conjugation</keyword>
<feature type="chain" id="PRO_0000260306" description="ATP-dependent RNA helicase DHX15">
    <location>
        <begin position="1"/>
        <end position="795"/>
    </location>
</feature>
<feature type="domain" description="Helicase ATP-binding" evidence="3">
    <location>
        <begin position="147"/>
        <end position="313"/>
    </location>
</feature>
<feature type="domain" description="Helicase C-terminal" evidence="4">
    <location>
        <begin position="338"/>
        <end position="518"/>
    </location>
</feature>
<feature type="region of interest" description="Disordered" evidence="5">
    <location>
        <begin position="1"/>
        <end position="108"/>
    </location>
</feature>
<feature type="short sequence motif" description="DEAH box">
    <location>
        <begin position="260"/>
        <end position="263"/>
    </location>
</feature>
<feature type="compositionally biased region" description="Basic and acidic residues" evidence="5">
    <location>
        <begin position="20"/>
        <end position="62"/>
    </location>
</feature>
<feature type="compositionally biased region" description="Low complexity" evidence="5">
    <location>
        <begin position="79"/>
        <end position="108"/>
    </location>
</feature>
<feature type="binding site" evidence="3">
    <location>
        <begin position="160"/>
        <end position="167"/>
    </location>
    <ligand>
        <name>ATP</name>
        <dbReference type="ChEBI" id="CHEBI:30616"/>
    </ligand>
</feature>
<feature type="modified residue" description="Phosphoserine" evidence="2">
    <location>
        <position position="15"/>
    </location>
</feature>
<feature type="modified residue" description="N6-acetyllysine" evidence="2">
    <location>
        <position position="488"/>
    </location>
</feature>
<feature type="cross-link" description="Glycyl lysine isopeptide (Lys-Gly) (interchain with G-Cter in SUMO2)" evidence="2">
    <location>
        <position position="786"/>
    </location>
</feature>
<feature type="sequence conflict" description="In Ref. 1; CAH91066." evidence="6" ref="1">
    <original>I</original>
    <variation>S</variation>
    <location>
        <position position="312"/>
    </location>
</feature>
<feature type="sequence conflict" description="In Ref. 1; CAH91066." evidence="6" ref="1">
    <original>S</original>
    <variation>L</variation>
    <location>
        <position position="793"/>
    </location>
</feature>
<dbReference type="EC" id="3.6.4.13" evidence="2"/>
<dbReference type="EMBL" id="CR858867">
    <property type="protein sequence ID" value="CAH91066.1"/>
    <property type="molecule type" value="mRNA"/>
</dbReference>
<dbReference type="EMBL" id="CR926098">
    <property type="protein sequence ID" value="CAI29724.1"/>
    <property type="molecule type" value="mRNA"/>
</dbReference>
<dbReference type="RefSeq" id="NP_001127370.1">
    <property type="nucleotide sequence ID" value="NM_001133898.1"/>
</dbReference>
<dbReference type="SMR" id="Q5RAZ4"/>
<dbReference type="FunCoup" id="Q5RAZ4">
    <property type="interactions" value="4492"/>
</dbReference>
<dbReference type="STRING" id="9601.ENSPPYP00000016358"/>
<dbReference type="Ensembl" id="ENSPPYT00000017023.3">
    <property type="protein sequence ID" value="ENSPPYP00000016358.3"/>
    <property type="gene ID" value="ENSPPYG00000014641.3"/>
</dbReference>
<dbReference type="GeneID" id="100174435"/>
<dbReference type="KEGG" id="pon:100174435"/>
<dbReference type="CTD" id="1665"/>
<dbReference type="eggNOG" id="KOG0925">
    <property type="taxonomic scope" value="Eukaryota"/>
</dbReference>
<dbReference type="GeneTree" id="ENSGT00940000155800"/>
<dbReference type="InParanoid" id="Q5RAZ4"/>
<dbReference type="OMA" id="MKVYPLY"/>
<dbReference type="OrthoDB" id="10253254at2759"/>
<dbReference type="Proteomes" id="UP000001595">
    <property type="component" value="Chromosome 4"/>
</dbReference>
<dbReference type="GO" id="GO:0016607">
    <property type="term" value="C:nuclear speck"/>
    <property type="evidence" value="ECO:0007669"/>
    <property type="project" value="Ensembl"/>
</dbReference>
<dbReference type="GO" id="GO:0005730">
    <property type="term" value="C:nucleolus"/>
    <property type="evidence" value="ECO:0007669"/>
    <property type="project" value="UniProtKB-SubCell"/>
</dbReference>
<dbReference type="GO" id="GO:0005689">
    <property type="term" value="C:U12-type spliceosomal complex"/>
    <property type="evidence" value="ECO:0007669"/>
    <property type="project" value="Ensembl"/>
</dbReference>
<dbReference type="GO" id="GO:0071008">
    <property type="term" value="C:U2-type post-mRNA release spliceosomal complex"/>
    <property type="evidence" value="ECO:0007669"/>
    <property type="project" value="Ensembl"/>
</dbReference>
<dbReference type="GO" id="GO:0005524">
    <property type="term" value="F:ATP binding"/>
    <property type="evidence" value="ECO:0007669"/>
    <property type="project" value="UniProtKB-KW"/>
</dbReference>
<dbReference type="GO" id="GO:0016887">
    <property type="term" value="F:ATP hydrolysis activity"/>
    <property type="evidence" value="ECO:0007669"/>
    <property type="project" value="RHEA"/>
</dbReference>
<dbReference type="GO" id="GO:0003725">
    <property type="term" value="F:double-stranded RNA binding"/>
    <property type="evidence" value="ECO:0000250"/>
    <property type="project" value="UniProtKB"/>
</dbReference>
<dbReference type="GO" id="GO:0003724">
    <property type="term" value="F:RNA helicase activity"/>
    <property type="evidence" value="ECO:0000250"/>
    <property type="project" value="UniProtKB"/>
</dbReference>
<dbReference type="GO" id="GO:0140374">
    <property type="term" value="P:antiviral innate immune response"/>
    <property type="evidence" value="ECO:0007669"/>
    <property type="project" value="Ensembl"/>
</dbReference>
<dbReference type="GO" id="GO:0042742">
    <property type="term" value="P:defense response to bacterium"/>
    <property type="evidence" value="ECO:0007669"/>
    <property type="project" value="Ensembl"/>
</dbReference>
<dbReference type="GO" id="GO:0051607">
    <property type="term" value="P:defense response to virus"/>
    <property type="evidence" value="ECO:0000250"/>
    <property type="project" value="UniProtKB"/>
</dbReference>
<dbReference type="GO" id="GO:0006397">
    <property type="term" value="P:mRNA processing"/>
    <property type="evidence" value="ECO:0007669"/>
    <property type="project" value="UniProtKB-KW"/>
</dbReference>
<dbReference type="GO" id="GO:0043123">
    <property type="term" value="P:positive regulation of canonical NF-kappaB signal transduction"/>
    <property type="evidence" value="ECO:0000250"/>
    <property type="project" value="UniProtKB"/>
</dbReference>
<dbReference type="GO" id="GO:0008380">
    <property type="term" value="P:RNA splicing"/>
    <property type="evidence" value="ECO:0007669"/>
    <property type="project" value="UniProtKB-KW"/>
</dbReference>
<dbReference type="CDD" id="cd17973">
    <property type="entry name" value="DEXHc_DHX15"/>
    <property type="match status" value="1"/>
</dbReference>
<dbReference type="CDD" id="cd18791">
    <property type="entry name" value="SF2_C_RHA"/>
    <property type="match status" value="1"/>
</dbReference>
<dbReference type="FunFam" id="3.40.50.300:FF:000007">
    <property type="entry name" value="Pre-mRNA-splicing factor ATP-dependent RNA helicase"/>
    <property type="match status" value="1"/>
</dbReference>
<dbReference type="FunFam" id="3.40.50.300:FF:000324">
    <property type="entry name" value="pre-mRNA-splicing factor ATP-dependent RNA helicase DHX15"/>
    <property type="match status" value="1"/>
</dbReference>
<dbReference type="FunFam" id="1.20.120.1080:FF:000003">
    <property type="entry name" value="Pre-mRNA-splicing factor ATP-dependent RNA helicase PRP43"/>
    <property type="match status" value="1"/>
</dbReference>
<dbReference type="Gene3D" id="1.20.120.1080">
    <property type="match status" value="1"/>
</dbReference>
<dbReference type="Gene3D" id="3.40.50.300">
    <property type="entry name" value="P-loop containing nucleotide triphosphate hydrolases"/>
    <property type="match status" value="2"/>
</dbReference>
<dbReference type="InterPro" id="IPR011709">
    <property type="entry name" value="DEAD-box_helicase_OB_fold"/>
</dbReference>
<dbReference type="InterPro" id="IPR011545">
    <property type="entry name" value="DEAD/DEAH_box_helicase_dom"/>
</dbReference>
<dbReference type="InterPro" id="IPR044756">
    <property type="entry name" value="DHX15_DEXHc"/>
</dbReference>
<dbReference type="InterPro" id="IPR002464">
    <property type="entry name" value="DNA/RNA_helicase_DEAH_CS"/>
</dbReference>
<dbReference type="InterPro" id="IPR048333">
    <property type="entry name" value="HA2_WH"/>
</dbReference>
<dbReference type="InterPro" id="IPR007502">
    <property type="entry name" value="Helicase-assoc_dom"/>
</dbReference>
<dbReference type="InterPro" id="IPR014001">
    <property type="entry name" value="Helicase_ATP-bd"/>
</dbReference>
<dbReference type="InterPro" id="IPR001650">
    <property type="entry name" value="Helicase_C-like"/>
</dbReference>
<dbReference type="InterPro" id="IPR027417">
    <property type="entry name" value="P-loop_NTPase"/>
</dbReference>
<dbReference type="PANTHER" id="PTHR18934">
    <property type="entry name" value="ATP-DEPENDENT RNA HELICASE"/>
    <property type="match status" value="1"/>
</dbReference>
<dbReference type="PANTHER" id="PTHR18934:SF95">
    <property type="entry name" value="ATP-DEPENDENT RNA HELICASE DHX15"/>
    <property type="match status" value="1"/>
</dbReference>
<dbReference type="Pfam" id="PF00270">
    <property type="entry name" value="DEAD"/>
    <property type="match status" value="1"/>
</dbReference>
<dbReference type="Pfam" id="PF21010">
    <property type="entry name" value="HA2_C"/>
    <property type="match status" value="1"/>
</dbReference>
<dbReference type="Pfam" id="PF04408">
    <property type="entry name" value="HA2_N"/>
    <property type="match status" value="1"/>
</dbReference>
<dbReference type="Pfam" id="PF00271">
    <property type="entry name" value="Helicase_C"/>
    <property type="match status" value="1"/>
</dbReference>
<dbReference type="Pfam" id="PF07717">
    <property type="entry name" value="OB_NTP_bind"/>
    <property type="match status" value="1"/>
</dbReference>
<dbReference type="SMART" id="SM00487">
    <property type="entry name" value="DEXDc"/>
    <property type="match status" value="1"/>
</dbReference>
<dbReference type="SMART" id="SM00847">
    <property type="entry name" value="HA2"/>
    <property type="match status" value="1"/>
</dbReference>
<dbReference type="SMART" id="SM00490">
    <property type="entry name" value="HELICc"/>
    <property type="match status" value="1"/>
</dbReference>
<dbReference type="SUPFAM" id="SSF52540">
    <property type="entry name" value="P-loop containing nucleoside triphosphate hydrolases"/>
    <property type="match status" value="1"/>
</dbReference>
<dbReference type="PROSITE" id="PS00690">
    <property type="entry name" value="DEAH_ATP_HELICASE"/>
    <property type="match status" value="1"/>
</dbReference>
<dbReference type="PROSITE" id="PS51192">
    <property type="entry name" value="HELICASE_ATP_BIND_1"/>
    <property type="match status" value="1"/>
</dbReference>
<dbReference type="PROSITE" id="PS51194">
    <property type="entry name" value="HELICASE_CTER"/>
    <property type="match status" value="1"/>
</dbReference>
<reference key="1">
    <citation type="submission" date="2004-11" db="EMBL/GenBank/DDBJ databases">
        <authorList>
            <consortium name="The German cDNA consortium"/>
        </authorList>
    </citation>
    <scope>NUCLEOTIDE SEQUENCE [LARGE SCALE MRNA]</scope>
    <source>
        <tissue>Brain cortex</tissue>
        <tissue>Kidney</tissue>
    </source>
</reference>
<proteinExistence type="evidence at transcript level"/>
<evidence type="ECO:0000250" key="1">
    <source>
        <dbReference type="UniProtKB" id="O35286"/>
    </source>
</evidence>
<evidence type="ECO:0000250" key="2">
    <source>
        <dbReference type="UniProtKB" id="O43143"/>
    </source>
</evidence>
<evidence type="ECO:0000255" key="3">
    <source>
        <dbReference type="PROSITE-ProRule" id="PRU00541"/>
    </source>
</evidence>
<evidence type="ECO:0000255" key="4">
    <source>
        <dbReference type="PROSITE-ProRule" id="PRU00542"/>
    </source>
</evidence>
<evidence type="ECO:0000256" key="5">
    <source>
        <dbReference type="SAM" id="MobiDB-lite"/>
    </source>
</evidence>
<evidence type="ECO:0000305" key="6"/>